<comment type="function">
    <text evidence="1 3">Catalyzes an oxidative deamination of predominantly hydrophobic and aromatic L-amino acids, thus producing hydrogen peroxide that may contribute to the diverse toxic effects of this enzyme (PubMed:19944711). Shows activity on L-Leu (PubMed:19944711). Exhibits diverse biological activities, such as hemorrhage, hemolysis, edema, apoptosis of vascular endothelial cells or tumor cell lines, and antiparasitic activities, as well as regulation of platelet aggregation. Effects of snake L-amino oxidases on platelets are controversial, since they either induce aggregation or inhibit agonist-induced aggregation. These different effects are probably due to different experimental conditions (By similarity). In addition, this protein inhibits dose-dependently the growth of Gram-positive, Gram-negative bacteria and yeast, probably by the generation of hydrogen peroxide.</text>
</comment>
<comment type="catalytic activity">
    <reaction evidence="3">
        <text>an L-alpha-amino acid + O2 + H2O = a 2-oxocarboxylate + H2O2 + NH4(+)</text>
        <dbReference type="Rhea" id="RHEA:13781"/>
        <dbReference type="ChEBI" id="CHEBI:15377"/>
        <dbReference type="ChEBI" id="CHEBI:15379"/>
        <dbReference type="ChEBI" id="CHEBI:16240"/>
        <dbReference type="ChEBI" id="CHEBI:28938"/>
        <dbReference type="ChEBI" id="CHEBI:35179"/>
        <dbReference type="ChEBI" id="CHEBI:59869"/>
        <dbReference type="EC" id="1.4.3.2"/>
    </reaction>
</comment>
<comment type="catalytic activity">
    <reaction evidence="3">
        <text>L-leucine + O2 + H2O = 4-methyl-2-oxopentanoate + H2O2 + NH4(+)</text>
        <dbReference type="Rhea" id="RHEA:60996"/>
        <dbReference type="ChEBI" id="CHEBI:15377"/>
        <dbReference type="ChEBI" id="CHEBI:15379"/>
        <dbReference type="ChEBI" id="CHEBI:16240"/>
        <dbReference type="ChEBI" id="CHEBI:17865"/>
        <dbReference type="ChEBI" id="CHEBI:28938"/>
        <dbReference type="ChEBI" id="CHEBI:57427"/>
    </reaction>
</comment>
<comment type="cofactor">
    <cofactor evidence="2">
        <name>FAD</name>
        <dbReference type="ChEBI" id="CHEBI:57692"/>
    </cofactor>
</comment>
<comment type="subunit">
    <text evidence="3">Monomer. This is in contrast with most of its orthologs, that are non-covalently linked homodimers.</text>
</comment>
<comment type="subcellular location">
    <subcellularLocation>
        <location evidence="3">Secreted</location>
    </subcellularLocation>
</comment>
<comment type="tissue specificity">
    <text evidence="6">Expressed by the venom gland.</text>
</comment>
<comment type="PTM">
    <text evidence="2">N-glycosylated.</text>
</comment>
<comment type="miscellaneous">
    <text evidence="6">Has parasiticidal activities against leishmania, as a result of enzyme-catalyzed hydrogen peroxide production.</text>
</comment>
<comment type="similarity">
    <text evidence="5">Belongs to the flavin monoamine oxidase family. FIG1 subfamily.</text>
</comment>
<feature type="chain" id="PRO_0000412597" description="L-amino-acid oxidase">
    <location>
        <begin position="1"/>
        <end position="39" status="greater than"/>
    </location>
</feature>
<feature type="disulfide bond" evidence="2">
    <location>
        <begin position="10"/>
        <end status="unknown"/>
    </location>
</feature>
<feature type="non-terminal residue" evidence="4">
    <location>
        <position position="39"/>
    </location>
</feature>
<sequence>AHDGNPLEECFREDDEEFFLEIAKNGLTATSNPKRVVIV</sequence>
<protein>
    <recommendedName>
        <fullName>L-amino-acid oxidase</fullName>
        <shortName evidence="4">BmarLAAO</shortName>
        <shortName>LAO</shortName>
        <ecNumber evidence="3">1.4.3.2</ecNumber>
    </recommendedName>
</protein>
<keyword id="KW-0044">Antibiotic</keyword>
<keyword id="KW-0929">Antimicrobial</keyword>
<keyword id="KW-0053">Apoptosis</keyword>
<keyword id="KW-0204">Cytolysis</keyword>
<keyword id="KW-0903">Direct protein sequencing</keyword>
<keyword id="KW-1015">Disulfide bond</keyword>
<keyword id="KW-0274">FAD</keyword>
<keyword id="KW-0285">Flavoprotein</keyword>
<keyword id="KW-0295">Fungicide</keyword>
<keyword id="KW-0325">Glycoprotein</keyword>
<keyword id="KW-0354">Hemolysis</keyword>
<keyword id="KW-1199">Hemostasis impairing toxin</keyword>
<keyword id="KW-0560">Oxidoreductase</keyword>
<keyword id="KW-0964">Secreted</keyword>
<keyword id="KW-0800">Toxin</keyword>
<proteinExistence type="evidence at protein level"/>
<reference key="1">
    <citation type="journal article" date="2010" name="Toxicon">
        <title>Antibacterial and antiparasitic effects of Bothrops marajoensis venom and its fractions: phospholipase A2 and L-amino acid oxidase.</title>
        <authorList>
            <person name="Costa Torres A.F."/>
            <person name="Dantas R.T."/>
            <person name="Toyama M.H."/>
            <person name="Diz Filho E.B."/>
            <person name="Zara F.J."/>
            <person name="Rodrigues de Queiroz M.G."/>
            <person name="Pinto Nogueira N.A."/>
            <person name="Rosa de Oliveira M."/>
            <person name="de Oliveira Toyama D."/>
            <person name="Monteiro H.S.A."/>
            <person name="Martins A.M.C."/>
        </authorList>
    </citation>
    <scope>PROTEIN SEQUENCE</scope>
    <scope>FUNCTION</scope>
    <scope>SUBUNIT</scope>
    <scope>SUBCELLULAR LOCATION</scope>
    <scope>CATALYTIC ACTIVITY</scope>
    <source>
        <tissue>Venom</tissue>
    </source>
</reference>
<accession>P0CJ40</accession>
<name>OXLA_BOTMA</name>
<evidence type="ECO:0000250" key="1">
    <source>
        <dbReference type="UniProtKB" id="P0CC17"/>
    </source>
</evidence>
<evidence type="ECO:0000250" key="2">
    <source>
        <dbReference type="UniProtKB" id="P81382"/>
    </source>
</evidence>
<evidence type="ECO:0000269" key="3">
    <source>
    </source>
</evidence>
<evidence type="ECO:0000303" key="4">
    <source>
    </source>
</evidence>
<evidence type="ECO:0000305" key="5"/>
<evidence type="ECO:0000305" key="6">
    <source>
    </source>
</evidence>
<dbReference type="EC" id="1.4.3.2" evidence="3"/>
<dbReference type="SMR" id="P0CJ40"/>
<dbReference type="GO" id="GO:0005576">
    <property type="term" value="C:extracellular region"/>
    <property type="evidence" value="ECO:0007669"/>
    <property type="project" value="UniProtKB-SubCell"/>
</dbReference>
<dbReference type="GO" id="GO:0001716">
    <property type="term" value="F:L-amino-acid oxidase activity"/>
    <property type="evidence" value="ECO:0007669"/>
    <property type="project" value="UniProtKB-EC"/>
</dbReference>
<dbReference type="GO" id="GO:0090729">
    <property type="term" value="F:toxin activity"/>
    <property type="evidence" value="ECO:0007669"/>
    <property type="project" value="UniProtKB-KW"/>
</dbReference>
<dbReference type="GO" id="GO:0006915">
    <property type="term" value="P:apoptotic process"/>
    <property type="evidence" value="ECO:0007669"/>
    <property type="project" value="UniProtKB-KW"/>
</dbReference>
<dbReference type="GO" id="GO:0042742">
    <property type="term" value="P:defense response to bacterium"/>
    <property type="evidence" value="ECO:0007669"/>
    <property type="project" value="UniProtKB-KW"/>
</dbReference>
<dbReference type="GO" id="GO:0050832">
    <property type="term" value="P:defense response to fungus"/>
    <property type="evidence" value="ECO:0007669"/>
    <property type="project" value="UniProtKB-KW"/>
</dbReference>
<dbReference type="GO" id="GO:0031640">
    <property type="term" value="P:killing of cells of another organism"/>
    <property type="evidence" value="ECO:0007669"/>
    <property type="project" value="UniProtKB-KW"/>
</dbReference>
<dbReference type="Gene3D" id="3.90.660.10">
    <property type="match status" value="1"/>
</dbReference>
<organism>
    <name type="scientific">Bothrops marajoensis</name>
    <name type="common">Marajo lancehead</name>
    <dbReference type="NCBI Taxonomy" id="157554"/>
    <lineage>
        <taxon>Eukaryota</taxon>
        <taxon>Metazoa</taxon>
        <taxon>Chordata</taxon>
        <taxon>Craniata</taxon>
        <taxon>Vertebrata</taxon>
        <taxon>Euteleostomi</taxon>
        <taxon>Lepidosauria</taxon>
        <taxon>Squamata</taxon>
        <taxon>Bifurcata</taxon>
        <taxon>Unidentata</taxon>
        <taxon>Episquamata</taxon>
        <taxon>Toxicofera</taxon>
        <taxon>Serpentes</taxon>
        <taxon>Colubroidea</taxon>
        <taxon>Viperidae</taxon>
        <taxon>Crotalinae</taxon>
        <taxon>Bothrops</taxon>
    </lineage>
</organism>